<name>AXIN1_MOUSE</name>
<accession>O35625</accession>
<feature type="chain" id="PRO_0000220889" description="Axin-1">
    <location>
        <begin position="1"/>
        <end position="863"/>
    </location>
</feature>
<feature type="domain" description="RGS" evidence="5">
    <location>
        <begin position="88"/>
        <end position="211"/>
    </location>
</feature>
<feature type="domain" description="DIX" evidence="4">
    <location>
        <begin position="781"/>
        <end position="863"/>
    </location>
</feature>
<feature type="region of interest" description="Disordered" evidence="6">
    <location>
        <begin position="1"/>
        <end position="81"/>
    </location>
</feature>
<feature type="region of interest" description="Interaction with TP53" evidence="13">
    <location>
        <begin position="209"/>
        <end position="338"/>
    </location>
</feature>
<feature type="region of interest" description="Disordered" evidence="6">
    <location>
        <begin position="215"/>
        <end position="240"/>
    </location>
</feature>
<feature type="region of interest" description="Disordered" evidence="6">
    <location>
        <begin position="249"/>
        <end position="268"/>
    </location>
</feature>
<feature type="region of interest" description="Disordered" evidence="6">
    <location>
        <begin position="315"/>
        <end position="344"/>
    </location>
</feature>
<feature type="region of interest" description="Interaction with GSK3B" evidence="3">
    <location>
        <begin position="348"/>
        <end position="432"/>
    </location>
</feature>
<feature type="region of interest" description="Interaction with SIAH1" evidence="2">
    <location>
        <begin position="353"/>
        <end position="411"/>
    </location>
</feature>
<feature type="region of interest" description="Interaction with beta-catenin" evidence="1">
    <location>
        <begin position="433"/>
        <end position="501"/>
    </location>
</feature>
<feature type="region of interest" description="Interaction with RNF111" evidence="1">
    <location>
        <begin position="505"/>
        <end position="758"/>
    </location>
</feature>
<feature type="region of interest" description="Disordered" evidence="6">
    <location>
        <begin position="529"/>
        <end position="624"/>
    </location>
</feature>
<feature type="region of interest" description="Interaction with PPP2CA" evidence="1">
    <location>
        <begin position="572"/>
        <end position="790"/>
    </location>
</feature>
<feature type="region of interest" description="Disordered" evidence="6">
    <location>
        <begin position="642"/>
        <end position="664"/>
    </location>
</feature>
<feature type="region of interest" description="Interaction with HIPK2" evidence="13">
    <location>
        <begin position="678"/>
        <end position="753"/>
    </location>
</feature>
<feature type="short sequence motif" description="Tankyrase-binding motif">
    <location>
        <begin position="20"/>
        <end position="29"/>
    </location>
</feature>
<feature type="compositionally biased region" description="Polar residues" evidence="6">
    <location>
        <begin position="34"/>
        <end position="61"/>
    </location>
</feature>
<feature type="compositionally biased region" description="Acidic residues" evidence="6">
    <location>
        <begin position="249"/>
        <end position="258"/>
    </location>
</feature>
<feature type="compositionally biased region" description="Low complexity" evidence="6">
    <location>
        <begin position="325"/>
        <end position="339"/>
    </location>
</feature>
<feature type="compositionally biased region" description="Basic residues" evidence="6">
    <location>
        <begin position="529"/>
        <end position="542"/>
    </location>
</feature>
<feature type="compositionally biased region" description="Basic and acidic residues" evidence="6">
    <location>
        <begin position="543"/>
        <end position="554"/>
    </location>
</feature>
<feature type="compositionally biased region" description="Polar residues" evidence="6">
    <location>
        <begin position="575"/>
        <end position="584"/>
    </location>
</feature>
<feature type="modified residue" description="Phosphoserine" evidence="22">
    <location>
        <position position="75"/>
    </location>
</feature>
<feature type="modified residue" description="Phosphoserine; by CK1" evidence="2">
    <location>
        <position position="77"/>
    </location>
</feature>
<feature type="modified residue" description="Phosphoserine" evidence="22">
    <location>
        <position position="217"/>
    </location>
</feature>
<feature type="modified residue" description="Phosphoserine; by CK1" evidence="2">
    <location>
        <position position="468"/>
    </location>
</feature>
<feature type="modified residue" description="Phosphothreonine; by GSK3-beta" evidence="21">
    <location>
        <position position="480"/>
    </location>
</feature>
<feature type="modified residue" description="Phosphoserine; by GSK3-beta" evidence="7">
    <location>
        <position position="485"/>
    </location>
</feature>
<feature type="modified residue" description="Phosphoserine" evidence="7">
    <location>
        <position position="492"/>
    </location>
</feature>
<feature type="modified residue" description="Phosphoserine" evidence="2">
    <location>
        <position position="509"/>
    </location>
</feature>
<feature type="cross-link" description="Glycyl lysine isopeptide (Lys-Gly) (interchain with G-Cter in SUMO)" evidence="10 16">
    <location>
        <position position="858"/>
    </location>
</feature>
<feature type="cross-link" description="Glycyl lysine isopeptide (Lys-Gly) (interchain with G-Cter in SUMO)" evidence="10 16">
    <location>
        <position position="861"/>
    </location>
</feature>
<feature type="splice variant" id="VSP_000452" description="In isoform 2." evidence="19">
    <location>
        <begin position="731"/>
        <end position="766"/>
    </location>
</feature>
<feature type="mutagenesis site" description="Greatly reduced GSK3B-mediated phosphorylation; when associated with A-485 and A-492." evidence="7">
    <original>T</original>
    <variation>A</variation>
    <location>
        <position position="480"/>
    </location>
</feature>
<feature type="mutagenesis site" description="Greatly reduced GSK3B-mediated phosphorylation and large effect on the inhibitory activity in Wnt-signaling; when associated with A-480 and A-492." evidence="7">
    <original>S</original>
    <variation>A</variation>
    <location>
        <position position="485"/>
    </location>
</feature>
<feature type="mutagenesis site" description="Greatly reduced GSK3B-mediated phosphorylation; when associated with A-480 and A-485." evidence="7">
    <original>S</original>
    <variation>A</variation>
    <location>
        <position position="492"/>
    </location>
</feature>
<feature type="mutagenesis site" description="Little effect on inhibitory activity on Wnt-signaling." evidence="7">
    <original>S</original>
    <variation>I</variation>
    <location>
        <position position="492"/>
    </location>
</feature>
<feature type="mutagenesis site" description="No effect on phosphorylation. Little effect on inhibitory activity on Wnt-signaling." evidence="7">
    <original>S</original>
    <variation>A</variation>
    <location>
        <position position="495"/>
    </location>
</feature>
<feature type="mutagenesis site" description="Abolishes binding of PIAS1 and PIAS2. Dramatically reduces sumoylation and abolishes AXIN1-mediated JNK activation. No effect on homodimerization nor on Wnt-signaling." evidence="10">
    <location>
        <begin position="858"/>
        <end position="863"/>
    </location>
</feature>
<feature type="mutagenesis site" description="Decreased sumoylation followed by increased ubiquitination; when associated with A-861." evidence="16">
    <original>K</original>
    <variation>A</variation>
    <location>
        <position position="858"/>
    </location>
</feature>
<feature type="mutagenesis site" description="Decreased sumoylation followed by increased ubiquitination; when associated with A-858." evidence="16">
    <original>K</original>
    <variation>A</variation>
    <location>
        <position position="861"/>
    </location>
</feature>
<feature type="sequence conflict" description="In Ref. 1; AAC53285." evidence="20" ref="1">
    <original>A</original>
    <variation>P</variation>
    <location>
        <position position="589"/>
    </location>
</feature>
<feature type="sequence conflict" description="In Ref. 1; AAC53285." evidence="20" ref="1">
    <original>A</original>
    <variation>G</variation>
    <location>
        <position position="787"/>
    </location>
</feature>
<feature type="sequence conflict" description="In Ref. 1; AAC53285." evidence="20" ref="1">
    <original>A</original>
    <variation>P</variation>
    <location>
        <position position="846"/>
    </location>
</feature>
<feature type="strand" evidence="23">
    <location>
        <begin position="64"/>
        <end position="66"/>
    </location>
</feature>
<proteinExistence type="evidence at protein level"/>
<gene>
    <name type="primary">Axin1</name>
    <name type="synonym">Axin</name>
    <name type="synonym">Fu</name>
</gene>
<organism>
    <name type="scientific">Mus musculus</name>
    <name type="common">Mouse</name>
    <dbReference type="NCBI Taxonomy" id="10090"/>
    <lineage>
        <taxon>Eukaryota</taxon>
        <taxon>Metazoa</taxon>
        <taxon>Chordata</taxon>
        <taxon>Craniata</taxon>
        <taxon>Vertebrata</taxon>
        <taxon>Euteleostomi</taxon>
        <taxon>Mammalia</taxon>
        <taxon>Eutheria</taxon>
        <taxon>Euarchontoglires</taxon>
        <taxon>Glires</taxon>
        <taxon>Rodentia</taxon>
        <taxon>Myomorpha</taxon>
        <taxon>Muroidea</taxon>
        <taxon>Muridae</taxon>
        <taxon>Murinae</taxon>
        <taxon>Mus</taxon>
        <taxon>Mus</taxon>
    </lineage>
</organism>
<keyword id="KW-0002">3D-structure</keyword>
<keyword id="KW-0013">ADP-ribosylation</keyword>
<keyword id="KW-0025">Alternative splicing</keyword>
<keyword id="KW-0053">Apoptosis</keyword>
<keyword id="KW-1003">Cell membrane</keyword>
<keyword id="KW-0963">Cytoplasm</keyword>
<keyword id="KW-0217">Developmental protein</keyword>
<keyword id="KW-1017">Isopeptide bond</keyword>
<keyword id="KW-0472">Membrane</keyword>
<keyword id="KW-0539">Nucleus</keyword>
<keyword id="KW-0597">Phosphoprotein</keyword>
<keyword id="KW-1185">Reference proteome</keyword>
<keyword id="KW-0043">Tumor suppressor</keyword>
<keyword id="KW-0832">Ubl conjugation</keyword>
<keyword id="KW-0879">Wnt signaling pathway</keyword>
<comment type="function">
    <text evidence="2 10 13 15">Component of the beta-catenin destruction complex required for regulating CTNNB1 levels through phosphorylation and ubiquitination, and modulating Wnt-signaling (By similarity). Controls dorsoventral patterning via two opposing effects; down-regulates CTNNB1 to inhibit the Wnt signaling pathway and ventralize embryos, but also dorsalizes embryos by activating a Wnt-independent JNK signaling pathway. In Wnt signaling, probably facilitates the phosphorylation of CTNNB1 and APC by GSK3B. Likely to function as a tumor suppressor. Facilitates the phosphorylation of TP53 by HIPK2 upon ultraviolet irradiation. Enhances TGF-beta signaling by recruiting the RNF111 E3 ubiquitin ligase and promoting the degradation of inhibitory SMAD7 (By similarity). Also a component of the AXIN1-HIPK2-TP53 complex which controls cell growth, apoptosis and development.</text>
</comment>
<comment type="subunit">
    <text evidence="2 3 7 8 9 10 11 12 13 15 17 18">Homodimer (PubMed:17681137). Component of the beta-catenin destruction complex, containing at least CTNNB1, an axin and GSK3B, that regulates CTNNB1 protein levels through phosphorylation and ubiquitination (By similarity). Interacts with GSK3B; the interaction hyperphosphorylates CTNNB1 leading to its ubiquitination and destruction (By similarity). Interacts with DAXX; the interaction stimulates the interaction of DAXX with TP53, stimulates 'Ser-46' phosphorylation of TP53 and induces cell death on UV irradiation (By similarity). Also interacts with APC, RNF111, SMAD6 and SMAD7 (By similarity). Interacts (via the C-terminal) with PPP1CA; the interaction dephosphorylates AXIN1 and regulates interaction with GSK3B (By similarity). Interacts with PPP2CA; the interaction dephosphorylates AXIN1 (By similarity). Interacts with MDFI; the interaction decreases AXIN1-mediated JUN N-terminal kinase (JNK) activation (By similarity). Interacts with MDFIC; the interaction inhibits beta-cateninin-mediated signaling and AXIN1-mediated JUN N-terminal kinase (JNK) activation (By similarity). Binds ANKRD6, PIAS1, PIAS2, PIAS4, SUMO1, MAP3K1 and MAP3K4 (PubMed:12183362, PubMed:12223491). Component of the AXIN1-HIPK2-TP53 complex (PubMed:15526030). Interacts directly in the complex with TP53 and HIPK2 (PubMed:15526030). Interacts with DIXDC1; the interaction prevents interaction with MAP3K1 (PubMed:15262978). Interacts with AIDA; the interaction blocks the AXIN1-mediated JNK activation through disrupting AXIN1 homodimerization and Wnt signaling (PubMed:17681137). Interacts with LRP5 (via its phosphorylated PPPSP motifs); the interaction is stimulated by WNT1 and GSK3B and activates beta-catenin signaling (PubMed:11336703). Interacts with CTNNB1 (via the armadillo repeats 2-7) (PubMed:10581160, PubMed:15063782). Interacts with MACF1 (By similarity). Found in a complex composed of MACF1, APC, AXIN1, CTNNB1 and GSK3B (By similarity). Interacts with TNKS (By similarity). Interacts with DAB2; the interaction is mutually exclusive with the AXIN1:PPP1CA interaction (PubMed:19581931). Interacts with ZBED3 (via PPPSP motif); the interaction is direct, enhanced by protein kinase GSK3B and casein kinase CSNK1E activities and decreases GSK3B-induced beta-catenin serine and threonine phosphorylations (PubMed:19141611). Interacts with WDR26 (By similarity). Interacts with GID8 (By similarity). Interacts with SIAH1 and SIAH2; both probably catalyze AXIN1 ubiquitination and subsequent proteasome-mediated ubiquitin-dependent degradation. Interaction with GSK3B and AXIN1 is competitive (By similarity).</text>
</comment>
<comment type="interaction">
    <interactant intactId="EBI-2365912">
        <id>O35625</id>
    </interactant>
    <interactant intactId="EBI-1391846">
        <id>P98078</id>
        <label>Dab2</label>
    </interactant>
    <organismsDiffer>false</organismsDiffer>
    <experiments>4</experiments>
</comment>
<comment type="interaction">
    <interactant intactId="EBI-2365912">
        <id>O35625</id>
    </interactant>
    <interactant intactId="EBI-1538450">
        <id>Q61062</id>
        <label>Dvl3</label>
    </interactant>
    <organismsDiffer>false</organismsDiffer>
    <experiments>2</experiments>
</comment>
<comment type="interaction">
    <interactant intactId="EBI-2365912">
        <id>O35625</id>
    </interactant>
    <interactant intactId="EBI-357187">
        <id>P62137</id>
        <label>Ppp1ca</label>
    </interactant>
    <organismsDiffer>false</organismsDiffer>
    <experiments>2</experiments>
</comment>
<comment type="interaction">
    <interactant intactId="EBI-2365912">
        <id>O35625</id>
    </interactant>
    <interactant intactId="EBI-646015">
        <id>Q99ML9</id>
        <label>Rnf111</label>
    </interactant>
    <organismsDiffer>false</organismsDiffer>
    <experiments>4</experiments>
</comment>
<comment type="interaction">
    <interactant intactId="EBI-2365912">
        <id>O35625</id>
    </interactant>
    <interactant intactId="EBI-2337983">
        <id>Q8BUN5</id>
        <label>Smad3</label>
    </interactant>
    <organismsDiffer>false</organismsDiffer>
    <experiments>2</experiments>
</comment>
<comment type="interaction">
    <interactant intactId="EBI-2365912">
        <id>O35625</id>
    </interactant>
    <interactant intactId="EBI-4321242">
        <id>O35182</id>
        <label>Smad6</label>
    </interactant>
    <organismsDiffer>false</organismsDiffer>
    <experiments>2</experiments>
</comment>
<comment type="interaction">
    <interactant intactId="EBI-2365912">
        <id>O35625</id>
    </interactant>
    <interactant intactId="EBI-5274835">
        <id>O35253</id>
        <label>Smad7</label>
    </interactant>
    <organismsDiffer>false</organismsDiffer>
    <experiments>2</experiments>
</comment>
<comment type="interaction">
    <interactant intactId="EBI-2365912">
        <id>O35625</id>
    </interactant>
    <interactant intactId="EBI-1211920">
        <id>Q9EPK5</id>
        <label>Wwtr1</label>
    </interactant>
    <organismsDiffer>false</organismsDiffer>
    <experiments>4</experiments>
</comment>
<comment type="interaction">
    <interactant intactId="EBI-2365912">
        <id>O35625</id>
    </interactant>
    <interactant intactId="EBI-491549">
        <id>P35222</id>
        <label>CTNNB1</label>
    </interactant>
    <organismsDiffer>true</organismsDiffer>
    <experiments>4</experiments>
</comment>
<comment type="interaction">
    <interactant intactId="EBI-2365912">
        <id>O35625</id>
    </interactant>
    <interactant intactId="EBI-373586">
        <id>P49841</id>
        <label>GSK3B</label>
    </interactant>
    <organismsDiffer>true</organismsDiffer>
    <experiments>5</experiments>
</comment>
<comment type="interaction">
    <interactant intactId="EBI-2365912">
        <id>O35625</id>
    </interactant>
    <interactant intactId="EBI-910915">
        <id>O75581</id>
        <label>LRP6</label>
    </interactant>
    <organismsDiffer>true</organismsDiffer>
    <experiments>2</experiments>
</comment>
<comment type="interaction">
    <interactant intactId="EBI-2365912">
        <id>O35625</id>
    </interactant>
    <interactant intactId="EBI-714215">
        <id>Q15583</id>
        <label>TGIF1</label>
    </interactant>
    <organismsDiffer>true</organismsDiffer>
    <experiments>2</experiments>
</comment>
<comment type="interaction">
    <interactant intactId="EBI-2365912">
        <id>O35625</id>
    </interactant>
    <interactant intactId="EBI-1105254">
        <id>O95271</id>
        <label>TNKS</label>
    </interactant>
    <organismsDiffer>true</organismsDiffer>
    <experiments>4</experiments>
</comment>
<comment type="interaction">
    <interactant intactId="EBI-2365912">
        <id>O35625</id>
    </interactant>
    <interactant intactId="EBI-1044059">
        <id>P46937</id>
        <label>YAP1</label>
    </interactant>
    <organismsDiffer>true</organismsDiffer>
    <experiments>3</experiments>
</comment>
<comment type="subcellular location">
    <subcellularLocation>
        <location evidence="14 17">Cytoplasm</location>
    </subcellularLocation>
    <subcellularLocation>
        <location evidence="2">Nucleus</location>
    </subcellularLocation>
    <subcellularLocation>
        <location evidence="14">Cell membrane</location>
    </subcellularLocation>
    <subcellularLocation>
        <location evidence="17">Membrane</location>
    </subcellularLocation>
    <text evidence="2 14">On UV irradiation, translocates to the nucleus and colocalizes with DAAX (By similarity). MACF1 is required for its translocation to cell membrane (PubMed:16815997).</text>
</comment>
<comment type="alternative products">
    <event type="alternative splicing"/>
    <isoform>
        <id>O35625-1</id>
        <name>1</name>
        <sequence type="displayed"/>
    </isoform>
    <isoform>
        <id>O35625-2</id>
        <name>2</name>
        <sequence type="described" ref="VSP_000452"/>
    </isoform>
</comment>
<comment type="tissue specificity">
    <text>Expressed in embryonic stem cells.</text>
</comment>
<comment type="developmental stage">
    <text>Widely expressed at 10.5 dpc to 16.5 dpc.</text>
</comment>
<comment type="domain">
    <text evidence="1">The tankyrase-binding motif (also named TBD) is required for interaction with tankyrase TNKS and TNKS2.</text>
</comment>
<comment type="PTM">
    <text evidence="1 7 11">Phosphorylation and dephosphorylation of AXIN1 regulates assembly and function of the beta-catenin complex. Phosphorylated by CK1 and GSK3B. Dephosphorylated by PPP1CA and PPP2CA. Phosphorylation by CK1 enhances binding of GSK3B to AXIN1 (By similarity). Also phosphorylated by CDK2 which regulates interaction with CTNBB1.</text>
</comment>
<comment type="PTM">
    <text evidence="1">ADP-ribosylated by tankyrase TNKS and TNKS2. Poly-ADP-ribosylated protein is recognized by RNF146, followed by ubiquitination and subsequent activation of the Wnt signaling pathway (By similarity).</text>
</comment>
<comment type="PTM">
    <text evidence="1 2 10 16">Ubiquitinated by RNF146 when poly-ADP-ribosylated, leading to its degradation and subsequent activation of the Wnt signaling pathway. Deubiquitinated by USP34, deubiquitinated downstream of beta-catenin stabilization step: deubiquitination is important for nuclear accumulation during Wnt signaling to positively regulate beta-catenin (CTNBB1)-mediated transcription (By similarity). Sumoylation at Lys-858 and Lys-861 prevents ubiquitination and degradation. Sumoylation is required for AXIN1-mediated JNK activation. Ubiquitination by SIAH1 and SIAH2 induces its proteasomal degradation as part of the activation of the Wnt signaling pathway (By similarity).</text>
</comment>
<comment type="sequence caution" evidence="20">
    <conflict type="erroneous initiation">
        <sequence resource="EMBL-CDS" id="AAC53285"/>
    </conflict>
    <text>Extended N-terminus.</text>
</comment>
<evidence type="ECO:0000250" key="1"/>
<evidence type="ECO:0000250" key="2">
    <source>
        <dbReference type="UniProtKB" id="O15169"/>
    </source>
</evidence>
<evidence type="ECO:0000250" key="3">
    <source>
        <dbReference type="UniProtKB" id="O70239"/>
    </source>
</evidence>
<evidence type="ECO:0000255" key="4">
    <source>
        <dbReference type="PROSITE-ProRule" id="PRU00069"/>
    </source>
</evidence>
<evidence type="ECO:0000255" key="5">
    <source>
        <dbReference type="PROSITE-ProRule" id="PRU00171"/>
    </source>
</evidence>
<evidence type="ECO:0000256" key="6">
    <source>
        <dbReference type="SAM" id="MobiDB-lite"/>
    </source>
</evidence>
<evidence type="ECO:0000269" key="7">
    <source>
    </source>
</evidence>
<evidence type="ECO:0000269" key="8">
    <source>
    </source>
</evidence>
<evidence type="ECO:0000269" key="9">
    <source>
    </source>
</evidence>
<evidence type="ECO:0000269" key="10">
    <source>
    </source>
</evidence>
<evidence type="ECO:0000269" key="11">
    <source>
    </source>
</evidence>
<evidence type="ECO:0000269" key="12">
    <source>
    </source>
</evidence>
<evidence type="ECO:0000269" key="13">
    <source>
    </source>
</evidence>
<evidence type="ECO:0000269" key="14">
    <source>
    </source>
</evidence>
<evidence type="ECO:0000269" key="15">
    <source>
    </source>
</evidence>
<evidence type="ECO:0000269" key="16">
    <source>
    </source>
</evidence>
<evidence type="ECO:0000269" key="17">
    <source>
    </source>
</evidence>
<evidence type="ECO:0000269" key="18">
    <source>
    </source>
</evidence>
<evidence type="ECO:0000303" key="19">
    <source>
    </source>
</evidence>
<evidence type="ECO:0000305" key="20"/>
<evidence type="ECO:0000305" key="21">
    <source>
    </source>
</evidence>
<evidence type="ECO:0007744" key="22">
    <source>
    </source>
</evidence>
<evidence type="ECO:0007829" key="23">
    <source>
        <dbReference type="PDB" id="3UTM"/>
    </source>
</evidence>
<protein>
    <recommendedName>
        <fullName>Axin-1</fullName>
    </recommendedName>
    <alternativeName>
        <fullName>Axis inhibition protein 1</fullName>
    </alternativeName>
    <alternativeName>
        <fullName>Protein Fused</fullName>
    </alternativeName>
</protein>
<dbReference type="EMBL" id="AF009011">
    <property type="protein sequence ID" value="AAC53285.1"/>
    <property type="status" value="ALT_INIT"/>
    <property type="molecule type" value="mRNA"/>
</dbReference>
<dbReference type="EMBL" id="AC126438">
    <property type="status" value="NOT_ANNOTATED_CDS"/>
    <property type="molecule type" value="Genomic_DNA"/>
</dbReference>
<dbReference type="EMBL" id="AC140047">
    <property type="status" value="NOT_ANNOTATED_CDS"/>
    <property type="molecule type" value="Genomic_DNA"/>
</dbReference>
<dbReference type="CCDS" id="CCDS28547.2">
    <molecule id="O35625-1"/>
</dbReference>
<dbReference type="CCDS" id="CCDS50042.1">
    <molecule id="O35625-2"/>
</dbReference>
<dbReference type="RefSeq" id="NP_001153070.2">
    <molecule id="O35625-2"/>
    <property type="nucleotide sequence ID" value="NM_001159598.2"/>
</dbReference>
<dbReference type="RefSeq" id="NP_001381310.1">
    <molecule id="O35625-1"/>
    <property type="nucleotide sequence ID" value="NM_001394381.1"/>
</dbReference>
<dbReference type="RefSeq" id="NP_001381311.1">
    <molecule id="O35625-2"/>
    <property type="nucleotide sequence ID" value="NM_001394382.1"/>
</dbReference>
<dbReference type="RefSeq" id="NP_001381318.1">
    <molecule id="O35625-2"/>
    <property type="nucleotide sequence ID" value="NM_001394389.1"/>
</dbReference>
<dbReference type="RefSeq" id="NP_033863.3">
    <molecule id="O35625-1"/>
    <property type="nucleotide sequence ID" value="NM_009733.3"/>
</dbReference>
<dbReference type="PDB" id="3UTM">
    <property type="method" value="X-ray"/>
    <property type="resolution" value="2.00 A"/>
    <property type="chains" value="C=1-80"/>
</dbReference>
<dbReference type="PDB" id="8VME">
    <property type="method" value="X-ray"/>
    <property type="resolution" value="2.30 A"/>
    <property type="chains" value="B=383-402"/>
</dbReference>
<dbReference type="PDB" id="8VMF">
    <property type="method" value="X-ray"/>
    <property type="resolution" value="2.50 A"/>
    <property type="chains" value="B=383-402"/>
</dbReference>
<dbReference type="PDBsum" id="3UTM"/>
<dbReference type="PDBsum" id="8VME"/>
<dbReference type="PDBsum" id="8VMF"/>
<dbReference type="SMR" id="O35625"/>
<dbReference type="BioGRID" id="198287">
    <property type="interactions" value="36"/>
</dbReference>
<dbReference type="ComplexPortal" id="CPX-103">
    <property type="entry name" value="Beta-catenin destruction core complex, Apc-Axin1-Gsk3b variant"/>
</dbReference>
<dbReference type="ComplexPortal" id="CPX-448">
    <property type="entry name" value="Beta-catenin destruction core complex, Apc2-Axin1-Gsk3b variant"/>
</dbReference>
<dbReference type="ComplexPortal" id="CPX-453">
    <property type="entry name" value="Beta-catenin destruction core complex, Apc-Axin1-Gsk3a variant"/>
</dbReference>
<dbReference type="ComplexPortal" id="CPX-456">
    <property type="entry name" value="Beta-catenin destruction core complex, Apc2-Axin1-Gsk3a variant"/>
</dbReference>
<dbReference type="CORUM" id="O35625"/>
<dbReference type="DIP" id="DIP-42637N"/>
<dbReference type="ELM" id="O35625"/>
<dbReference type="FunCoup" id="O35625">
    <property type="interactions" value="2735"/>
</dbReference>
<dbReference type="IntAct" id="O35625">
    <property type="interactions" value="29"/>
</dbReference>
<dbReference type="MINT" id="O35625"/>
<dbReference type="STRING" id="10090.ENSMUSP00000073974"/>
<dbReference type="ChEMBL" id="CHEMBL4295996"/>
<dbReference type="GlyGen" id="O35625">
    <property type="glycosylation" value="1 site"/>
</dbReference>
<dbReference type="iPTMnet" id="O35625"/>
<dbReference type="PhosphoSitePlus" id="O35625"/>
<dbReference type="PaxDb" id="10090-ENSMUSP00000073974"/>
<dbReference type="ProteomicsDB" id="273638">
    <molecule id="O35625-1"/>
</dbReference>
<dbReference type="ProteomicsDB" id="273639">
    <molecule id="O35625-2"/>
</dbReference>
<dbReference type="Pumba" id="O35625"/>
<dbReference type="DNASU" id="12005"/>
<dbReference type="Ensembl" id="ENSMUST00000074370.11">
    <molecule id="O35625-1"/>
    <property type="protein sequence ID" value="ENSMUSP00000073974.5"/>
    <property type="gene ID" value="ENSMUSG00000024182.19"/>
</dbReference>
<dbReference type="Ensembl" id="ENSMUST00020183805.1">
    <molecule id="O35625-2"/>
    <property type="protein sequence ID" value="ENSMUSP00001091662.1"/>
    <property type="gene ID" value="ENSMUSG00000024182.19"/>
</dbReference>
<dbReference type="GeneID" id="12005"/>
<dbReference type="KEGG" id="mmu:12005"/>
<dbReference type="AGR" id="MGI:1096327"/>
<dbReference type="CTD" id="8312"/>
<dbReference type="MGI" id="MGI:1096327">
    <property type="gene designation" value="Axin1"/>
</dbReference>
<dbReference type="eggNOG" id="KOG3589">
    <property type="taxonomic scope" value="Eukaryota"/>
</dbReference>
<dbReference type="GeneTree" id="ENSGT00940000156947"/>
<dbReference type="InParanoid" id="O35625"/>
<dbReference type="OrthoDB" id="10007451at2759"/>
<dbReference type="Reactome" id="R-MMU-195253">
    <property type="pathway name" value="Degradation of beta-catenin by the destruction complex"/>
</dbReference>
<dbReference type="Reactome" id="R-MMU-196299">
    <property type="pathway name" value="Beta-catenin phosphorylation cascade"/>
</dbReference>
<dbReference type="Reactome" id="R-MMU-201681">
    <property type="pathway name" value="TCF dependent signaling in response to WNT"/>
</dbReference>
<dbReference type="Reactome" id="R-MMU-4641257">
    <property type="pathway name" value="Degradation of AXIN"/>
</dbReference>
<dbReference type="Reactome" id="R-MMU-4641262">
    <property type="pathway name" value="Disassembly of the destruction complex and recruitment of AXIN to the membrane"/>
</dbReference>
<dbReference type="Reactome" id="R-MMU-5689880">
    <property type="pathway name" value="Ub-specific processing proteases"/>
</dbReference>
<dbReference type="BioGRID-ORCS" id="12005">
    <property type="hits" value="6 hits in 80 CRISPR screens"/>
</dbReference>
<dbReference type="ChiTaRS" id="Axin1">
    <property type="organism name" value="mouse"/>
</dbReference>
<dbReference type="EvolutionaryTrace" id="O35625"/>
<dbReference type="PRO" id="PR:O35625"/>
<dbReference type="Proteomes" id="UP000000589">
    <property type="component" value="Chromosome 17"/>
</dbReference>
<dbReference type="RNAct" id="O35625">
    <property type="molecule type" value="protein"/>
</dbReference>
<dbReference type="GO" id="GO:0030877">
    <property type="term" value="C:beta-catenin destruction complex"/>
    <property type="evidence" value="ECO:0000314"/>
    <property type="project" value="ParkinsonsUK-UCL"/>
</dbReference>
<dbReference type="GO" id="GO:0005938">
    <property type="term" value="C:cell cortex"/>
    <property type="evidence" value="ECO:0000314"/>
    <property type="project" value="MGI"/>
</dbReference>
<dbReference type="GO" id="GO:0005737">
    <property type="term" value="C:cytoplasm"/>
    <property type="evidence" value="ECO:0000314"/>
    <property type="project" value="BHF-UCL"/>
</dbReference>
<dbReference type="GO" id="GO:0031410">
    <property type="term" value="C:cytoplasmic vesicle"/>
    <property type="evidence" value="ECO:0000314"/>
    <property type="project" value="MGI"/>
</dbReference>
<dbReference type="GO" id="GO:0005829">
    <property type="term" value="C:cytosol"/>
    <property type="evidence" value="ECO:0000304"/>
    <property type="project" value="Reactome"/>
</dbReference>
<dbReference type="GO" id="GO:0016328">
    <property type="term" value="C:lateral plasma membrane"/>
    <property type="evidence" value="ECO:0000266"/>
    <property type="project" value="MGI"/>
</dbReference>
<dbReference type="GO" id="GO:0015630">
    <property type="term" value="C:microtubule cytoskeleton"/>
    <property type="evidence" value="ECO:0000314"/>
    <property type="project" value="MGI"/>
</dbReference>
<dbReference type="GO" id="GO:0005730">
    <property type="term" value="C:nucleolus"/>
    <property type="evidence" value="ECO:0007669"/>
    <property type="project" value="Ensembl"/>
</dbReference>
<dbReference type="GO" id="GO:0005634">
    <property type="term" value="C:nucleus"/>
    <property type="evidence" value="ECO:0000266"/>
    <property type="project" value="MGI"/>
</dbReference>
<dbReference type="GO" id="GO:0048471">
    <property type="term" value="C:perinuclear region of cytoplasm"/>
    <property type="evidence" value="ECO:0007669"/>
    <property type="project" value="Ensembl"/>
</dbReference>
<dbReference type="GO" id="GO:0005886">
    <property type="term" value="C:plasma membrane"/>
    <property type="evidence" value="ECO:0000314"/>
    <property type="project" value="UniProtKB"/>
</dbReference>
<dbReference type="GO" id="GO:0032991">
    <property type="term" value="C:protein-containing complex"/>
    <property type="evidence" value="ECO:0000314"/>
    <property type="project" value="MGI"/>
</dbReference>
<dbReference type="GO" id="GO:1990909">
    <property type="term" value="C:Wnt signalosome"/>
    <property type="evidence" value="ECO:0000314"/>
    <property type="project" value="ParkinsonsUK-UCL"/>
</dbReference>
<dbReference type="GO" id="GO:0008013">
    <property type="term" value="F:beta-catenin binding"/>
    <property type="evidence" value="ECO:0000315"/>
    <property type="project" value="MGI"/>
</dbReference>
<dbReference type="GO" id="GO:0070411">
    <property type="term" value="F:I-SMAD binding"/>
    <property type="evidence" value="ECO:0000314"/>
    <property type="project" value="BHF-UCL"/>
</dbReference>
<dbReference type="GO" id="GO:0042802">
    <property type="term" value="F:identical protein binding"/>
    <property type="evidence" value="ECO:0000353"/>
    <property type="project" value="MGI"/>
</dbReference>
<dbReference type="GO" id="GO:0002039">
    <property type="term" value="F:p53 binding"/>
    <property type="evidence" value="ECO:0000353"/>
    <property type="project" value="MGI"/>
</dbReference>
<dbReference type="GO" id="GO:0019904">
    <property type="term" value="F:protein domain specific binding"/>
    <property type="evidence" value="ECO:0000353"/>
    <property type="project" value="MGI"/>
</dbReference>
<dbReference type="GO" id="GO:0042803">
    <property type="term" value="F:protein homodimerization activity"/>
    <property type="evidence" value="ECO:0000353"/>
    <property type="project" value="UniProtKB"/>
</dbReference>
<dbReference type="GO" id="GO:0019901">
    <property type="term" value="F:protein kinase binding"/>
    <property type="evidence" value="ECO:0000353"/>
    <property type="project" value="ParkinsonsUK-UCL"/>
</dbReference>
<dbReference type="GO" id="GO:0043539">
    <property type="term" value="F:protein serine/threonine kinase activator activity"/>
    <property type="evidence" value="ECO:0007669"/>
    <property type="project" value="Ensembl"/>
</dbReference>
<dbReference type="GO" id="GO:0120283">
    <property type="term" value="F:protein serine/threonine kinase binding"/>
    <property type="evidence" value="ECO:0007669"/>
    <property type="project" value="Ensembl"/>
</dbReference>
<dbReference type="GO" id="GO:0070412">
    <property type="term" value="F:R-SMAD binding"/>
    <property type="evidence" value="ECO:0000353"/>
    <property type="project" value="MGI"/>
</dbReference>
<dbReference type="GO" id="GO:0035591">
    <property type="term" value="F:signaling adaptor activity"/>
    <property type="evidence" value="ECO:0000314"/>
    <property type="project" value="ParkinsonsUK-UCL"/>
</dbReference>
<dbReference type="GO" id="GO:0031625">
    <property type="term" value="F:ubiquitin protein ligase binding"/>
    <property type="evidence" value="ECO:0000353"/>
    <property type="project" value="BHF-UCL"/>
</dbReference>
<dbReference type="GO" id="GO:1990756">
    <property type="term" value="F:ubiquitin-like ligase-substrate adaptor activity"/>
    <property type="evidence" value="ECO:0000315"/>
    <property type="project" value="BHF-UCL"/>
</dbReference>
<dbReference type="GO" id="GO:0006915">
    <property type="term" value="P:apoptotic process"/>
    <property type="evidence" value="ECO:0007669"/>
    <property type="project" value="UniProtKB-KW"/>
</dbReference>
<dbReference type="GO" id="GO:0048318">
    <property type="term" value="P:axial mesoderm development"/>
    <property type="evidence" value="ECO:0000315"/>
    <property type="project" value="MGI"/>
</dbReference>
<dbReference type="GO" id="GO:0048320">
    <property type="term" value="P:axial mesoderm formation"/>
    <property type="evidence" value="ECO:0000315"/>
    <property type="project" value="MGI"/>
</dbReference>
<dbReference type="GO" id="GO:1904885">
    <property type="term" value="P:beta-catenin destruction complex assembly"/>
    <property type="evidence" value="ECO:0007669"/>
    <property type="project" value="Ensembl"/>
</dbReference>
<dbReference type="GO" id="GO:0060070">
    <property type="term" value="P:canonical Wnt signaling pathway"/>
    <property type="evidence" value="ECO:0000314"/>
    <property type="project" value="BHF-UCL"/>
</dbReference>
<dbReference type="GO" id="GO:0031122">
    <property type="term" value="P:cytoplasmic microtubule organization"/>
    <property type="evidence" value="ECO:0000316"/>
    <property type="project" value="MGI"/>
</dbReference>
<dbReference type="GO" id="GO:0009950">
    <property type="term" value="P:dorsal/ventral axis specification"/>
    <property type="evidence" value="ECO:0000314"/>
    <property type="project" value="MGI"/>
</dbReference>
<dbReference type="GO" id="GO:0009953">
    <property type="term" value="P:dorsal/ventral pattern formation"/>
    <property type="evidence" value="ECO:0000315"/>
    <property type="project" value="MGI"/>
</dbReference>
<dbReference type="GO" id="GO:0044725">
    <property type="term" value="P:epigenetic programming in the zygotic pronuclei"/>
    <property type="evidence" value="ECO:0000315"/>
    <property type="project" value="MGI"/>
</dbReference>
<dbReference type="GO" id="GO:0060322">
    <property type="term" value="P:head development"/>
    <property type="evidence" value="ECO:0000315"/>
    <property type="project" value="MGI"/>
</dbReference>
<dbReference type="GO" id="GO:0001701">
    <property type="term" value="P:in utero embryonic development"/>
    <property type="evidence" value="ECO:0000315"/>
    <property type="project" value="MGI"/>
</dbReference>
<dbReference type="GO" id="GO:0090090">
    <property type="term" value="P:negative regulation of canonical Wnt signaling pathway"/>
    <property type="evidence" value="ECO:0000314"/>
    <property type="project" value="ParkinsonsUK-UCL"/>
</dbReference>
<dbReference type="GO" id="GO:0045599">
    <property type="term" value="P:negative regulation of fat cell differentiation"/>
    <property type="evidence" value="ECO:0000314"/>
    <property type="project" value="MGI"/>
</dbReference>
<dbReference type="GO" id="GO:0010629">
    <property type="term" value="P:negative regulation of gene expression"/>
    <property type="evidence" value="ECO:0000314"/>
    <property type="project" value="MGI"/>
</dbReference>
<dbReference type="GO" id="GO:0051248">
    <property type="term" value="P:negative regulation of protein metabolic process"/>
    <property type="evidence" value="ECO:0000314"/>
    <property type="project" value="MGI"/>
</dbReference>
<dbReference type="GO" id="GO:0034244">
    <property type="term" value="P:negative regulation of transcription elongation by RNA polymerase II"/>
    <property type="evidence" value="ECO:0000314"/>
    <property type="project" value="MGI"/>
</dbReference>
<dbReference type="GO" id="GO:0030178">
    <property type="term" value="P:negative regulation of Wnt signaling pathway"/>
    <property type="evidence" value="ECO:0000314"/>
    <property type="project" value="MGI"/>
</dbReference>
<dbReference type="GO" id="GO:0006913">
    <property type="term" value="P:nucleocytoplasmic transport"/>
    <property type="evidence" value="ECO:0000314"/>
    <property type="project" value="MGI"/>
</dbReference>
<dbReference type="GO" id="GO:0046330">
    <property type="term" value="P:positive regulation of JNK cascade"/>
    <property type="evidence" value="ECO:0000315"/>
    <property type="project" value="UniProtKB"/>
</dbReference>
<dbReference type="GO" id="GO:0032436">
    <property type="term" value="P:positive regulation of proteasomal ubiquitin-dependent protein catabolic process"/>
    <property type="evidence" value="ECO:0000314"/>
    <property type="project" value="MGI"/>
</dbReference>
<dbReference type="GO" id="GO:0045860">
    <property type="term" value="P:positive regulation of protein kinase activity"/>
    <property type="evidence" value="ECO:0000314"/>
    <property type="project" value="CACAO"/>
</dbReference>
<dbReference type="GO" id="GO:0031398">
    <property type="term" value="P:positive regulation of protein ubiquitination"/>
    <property type="evidence" value="ECO:0000314"/>
    <property type="project" value="MGI"/>
</dbReference>
<dbReference type="GO" id="GO:0030511">
    <property type="term" value="P:positive regulation of transforming growth factor beta receptor signaling pathway"/>
    <property type="evidence" value="ECO:0000314"/>
    <property type="project" value="MGI"/>
</dbReference>
<dbReference type="GO" id="GO:2000060">
    <property type="term" value="P:positive regulation of ubiquitin-dependent protein catabolic process"/>
    <property type="evidence" value="ECO:0000314"/>
    <property type="project" value="MGI"/>
</dbReference>
<dbReference type="GO" id="GO:0036342">
    <property type="term" value="P:post-anal tail morphogenesis"/>
    <property type="evidence" value="ECO:0000315"/>
    <property type="project" value="MGI"/>
</dbReference>
<dbReference type="GO" id="GO:0043161">
    <property type="term" value="P:proteasome-mediated ubiquitin-dependent protein catabolic process"/>
    <property type="evidence" value="ECO:0000303"/>
    <property type="project" value="ComplexPortal"/>
</dbReference>
<dbReference type="GO" id="GO:0030163">
    <property type="term" value="P:protein catabolic process"/>
    <property type="evidence" value="ECO:0000314"/>
    <property type="project" value="MGI"/>
</dbReference>
<dbReference type="GO" id="GO:0000209">
    <property type="term" value="P:protein polyubiquitination"/>
    <property type="evidence" value="ECO:0000314"/>
    <property type="project" value="MGI"/>
</dbReference>
<dbReference type="GO" id="GO:0060828">
    <property type="term" value="P:regulation of canonical Wnt signaling pathway"/>
    <property type="evidence" value="ECO:0000314"/>
    <property type="project" value="MGI"/>
</dbReference>
<dbReference type="GO" id="GO:0007605">
    <property type="term" value="P:sensory perception of sound"/>
    <property type="evidence" value="ECO:0000315"/>
    <property type="project" value="MGI"/>
</dbReference>
<dbReference type="GO" id="GO:0016055">
    <property type="term" value="P:Wnt signaling pathway"/>
    <property type="evidence" value="ECO:0000314"/>
    <property type="project" value="MGI"/>
</dbReference>
<dbReference type="CDD" id="cd11582">
    <property type="entry name" value="Axin_TNKS_binding"/>
    <property type="match status" value="1"/>
</dbReference>
<dbReference type="CDD" id="cd08707">
    <property type="entry name" value="RGS_Axin"/>
    <property type="match status" value="1"/>
</dbReference>
<dbReference type="DisProt" id="DP02456"/>
<dbReference type="FunFam" id="1.10.167.10:FF:000003">
    <property type="entry name" value="Axin 1"/>
    <property type="match status" value="1"/>
</dbReference>
<dbReference type="FunFam" id="1.10.196.10:FF:000002">
    <property type="entry name" value="Axin 1"/>
    <property type="match status" value="1"/>
</dbReference>
<dbReference type="FunFam" id="2.40.240.130:FF:000002">
    <property type="entry name" value="Axin 1"/>
    <property type="match status" value="1"/>
</dbReference>
<dbReference type="Gene3D" id="1.10.196.10">
    <property type="match status" value="2"/>
</dbReference>
<dbReference type="Gene3D" id="2.40.240.130">
    <property type="match status" value="1"/>
</dbReference>
<dbReference type="Gene3D" id="1.10.167.10">
    <property type="entry name" value="Regulator of G-protein Signalling 4, domain 2"/>
    <property type="match status" value="1"/>
</dbReference>
<dbReference type="IDEAL" id="IID50192"/>
<dbReference type="InterPro" id="IPR043581">
    <property type="entry name" value="Axin-like"/>
</dbReference>
<dbReference type="InterPro" id="IPR014936">
    <property type="entry name" value="Axin_b-cat-bd"/>
</dbReference>
<dbReference type="InterPro" id="IPR032101">
    <property type="entry name" value="Axin_TNKS-bd"/>
</dbReference>
<dbReference type="InterPro" id="IPR001158">
    <property type="entry name" value="DIX"/>
</dbReference>
<dbReference type="InterPro" id="IPR038207">
    <property type="entry name" value="DIX_dom_sf"/>
</dbReference>
<dbReference type="InterPro" id="IPR016137">
    <property type="entry name" value="RGS"/>
</dbReference>
<dbReference type="InterPro" id="IPR036305">
    <property type="entry name" value="RGS_sf"/>
</dbReference>
<dbReference type="InterPro" id="IPR024066">
    <property type="entry name" value="RGS_subdom1/3"/>
</dbReference>
<dbReference type="InterPro" id="IPR044926">
    <property type="entry name" value="RGS_subdomain_2"/>
</dbReference>
<dbReference type="InterPro" id="IPR029071">
    <property type="entry name" value="Ubiquitin-like_domsf"/>
</dbReference>
<dbReference type="PANTHER" id="PTHR46102">
    <property type="entry name" value="AXIN"/>
    <property type="match status" value="1"/>
</dbReference>
<dbReference type="PANTHER" id="PTHR46102:SF3">
    <property type="entry name" value="AXIN-1"/>
    <property type="match status" value="1"/>
</dbReference>
<dbReference type="Pfam" id="PF16646">
    <property type="entry name" value="AXIN1_TNKS_BD"/>
    <property type="match status" value="1"/>
</dbReference>
<dbReference type="Pfam" id="PF08833">
    <property type="entry name" value="Axin_b-cat_bind"/>
    <property type="match status" value="1"/>
</dbReference>
<dbReference type="Pfam" id="PF00778">
    <property type="entry name" value="DIX"/>
    <property type="match status" value="1"/>
</dbReference>
<dbReference type="Pfam" id="PF00615">
    <property type="entry name" value="RGS"/>
    <property type="match status" value="1"/>
</dbReference>
<dbReference type="PRINTS" id="PR01301">
    <property type="entry name" value="RGSPROTEIN"/>
</dbReference>
<dbReference type="SMART" id="SM00021">
    <property type="entry name" value="DAX"/>
    <property type="match status" value="1"/>
</dbReference>
<dbReference type="SMART" id="SM00315">
    <property type="entry name" value="RGS"/>
    <property type="match status" value="1"/>
</dbReference>
<dbReference type="SUPFAM" id="SSF48097">
    <property type="entry name" value="Regulator of G-protein signaling, RGS"/>
    <property type="match status" value="1"/>
</dbReference>
<dbReference type="SUPFAM" id="SSF54236">
    <property type="entry name" value="Ubiquitin-like"/>
    <property type="match status" value="1"/>
</dbReference>
<dbReference type="PROSITE" id="PS50841">
    <property type="entry name" value="DIX"/>
    <property type="match status" value="1"/>
</dbReference>
<dbReference type="PROSITE" id="PS50132">
    <property type="entry name" value="RGS"/>
    <property type="match status" value="1"/>
</dbReference>
<sequence length="863" mass="96276">MNVQEQGFPLDLGASFTEDAPRPPVPGEEGELVSTDSRPVNHSFCSGKGTSIKSETSTATPRRSDLDLGYEPEGSASPTPPYLRWAESLHSLLDDQDGISLFRTFLKQEGCADLLDFWFACSGFRKLEPCDSNEEKRLKLARAIYRKYILDSNGIVSRQTKPATKSFIKDCVMKQQIDPAMFDQAQTEIQSTMEENTYPSFLKSDIYLEYTRTGSESPKVCSDQSSGSGTGKGMSGYLPTLNEDEEWKCDQDADEDDGRDPLPPSRLTQKLLLETAAPRAPSSRRYNEGRELRYGSWREPVNPYYVNSGYALAPATSANDSEQQSLSSDADTLSLTDSSVDGIPPYRIRKQHRREMQESIQVNGRVPLPHIPRTYRMPKEIRVEPQKFAEELIHRLEAVQRTREAEEKLEERLKRVRMEEEGEDGEMPSGPMASHKLPSVPAWHHFPPRYVDMGCSGLRDAHEENPESILDEHVQRVMRTPGCQSPGPGHRSPDSGHVAKTAVLGGTASGHGKHVPKLGLKLDTAGLHHHRHVHHHVHHNSARPKEQMEAEVARRVQSSFSWGPETHGHAKPRSYSENAGTTLSAGDLAFGGKTSAPSKRNTKKAESGKNANAEVPSTTEDAEKNQKIMQWIIEGEKEISRHRKAGHGSSGLRKQQAHESSRPLSIERPGAVHPWVSAQLRNSVQPSHLFIQDPTMPPNPAPNPLTQLEEARRRLEEEEKRANKLPSKQRYVQAVMQRGRTCVRPACAPVLSVVPAVSDLELSETETKSQRKAGGGSAPPCDSIVVAYYFCGEPIPYRTLVRGRAVTLGQFKELLTKKGSYRYYFKKVSDEFDCGVVFEEVREDEAVLPVFEEKIIGKVEKVD</sequence>
<reference key="1">
    <citation type="journal article" date="1997" name="Cell">
        <title>The mouse Fused locus encodes Axin, an inhibitor of the Wnt signaling pathway that regulates embryonic axis formation.</title>
        <authorList>
            <person name="Zeng L."/>
            <person name="Fagotto F."/>
            <person name="Zhang T."/>
            <person name="Hsu W."/>
            <person name="Vasicek T.J."/>
            <person name="Perry W.L. III"/>
            <person name="Lee J.J."/>
            <person name="Tilghman S.M."/>
            <person name="Gumbiner B.M."/>
            <person name="Costantini F."/>
        </authorList>
    </citation>
    <scope>NUCLEOTIDE SEQUENCE [MRNA] (ISOFORMS 1 AND 2)</scope>
</reference>
<reference key="2">
    <citation type="journal article" date="2009" name="PLoS Biol.">
        <title>Lineage-specific biology revealed by a finished genome assembly of the mouse.</title>
        <authorList>
            <person name="Church D.M."/>
            <person name="Goodstadt L."/>
            <person name="Hillier L.W."/>
            <person name="Zody M.C."/>
            <person name="Goldstein S."/>
            <person name="She X."/>
            <person name="Bult C.J."/>
            <person name="Agarwala R."/>
            <person name="Cherry J.L."/>
            <person name="DiCuccio M."/>
            <person name="Hlavina W."/>
            <person name="Kapustin Y."/>
            <person name="Meric P."/>
            <person name="Maglott D."/>
            <person name="Birtle Z."/>
            <person name="Marques A.C."/>
            <person name="Graves T."/>
            <person name="Zhou S."/>
            <person name="Teague B."/>
            <person name="Potamousis K."/>
            <person name="Churas C."/>
            <person name="Place M."/>
            <person name="Herschleb J."/>
            <person name="Runnheim R."/>
            <person name="Forrest D."/>
            <person name="Amos-Landgraf J."/>
            <person name="Schwartz D.C."/>
            <person name="Cheng Z."/>
            <person name="Lindblad-Toh K."/>
            <person name="Eichler E.E."/>
            <person name="Ponting C.P."/>
        </authorList>
    </citation>
    <scope>NUCLEOTIDE SEQUENCE [LARGE SCALE GENOMIC DNA]</scope>
    <source>
        <strain>C57BL/6J</strain>
    </source>
</reference>
<reference key="3">
    <citation type="journal article" date="1999" name="Biochem. Biophys. Res. Commun.">
        <title>A GSK3beta phosphorylation site in axin modulates interaction with beta-catenin and Tcf-mediated gene expression.</title>
        <authorList>
            <person name="Jho E."/>
            <person name="Lomvardas S."/>
            <person name="Costantini F."/>
        </authorList>
    </citation>
    <scope>PHOSPHORYLATION AT THR-480; SER-485 AND SER-492</scope>
    <scope>INTERACTION WITH CTNNB1</scope>
    <scope>MUTAGENESIS OF THR-480; SER-485; SER-492 AND SER-495</scope>
</reference>
<reference key="4">
    <citation type="journal article" date="2001" name="Mol. Cell">
        <title>Low-density lipoprotein receptor-related protein-5 binds to Axin and regulates the canonical Wnt signaling pathway.</title>
        <authorList>
            <person name="Mao J."/>
            <person name="Wang J."/>
            <person name="Liu B."/>
            <person name="Pan W."/>
            <person name="Farr G.H. III"/>
            <person name="Flynn C."/>
            <person name="Yuan H."/>
            <person name="Takada S."/>
            <person name="Kimelman D."/>
            <person name="Li L."/>
            <person name="Wu D."/>
        </authorList>
    </citation>
    <scope>INTERACTION WITH LRP5</scope>
</reference>
<reference key="5">
    <citation type="journal article" date="2002" name="Genes Dev.">
        <title>The ankyrin repeat protein diversin recruits casein kinase Iepsilon to the beta-catenin degradation complex and acts in both canonical Wnt and Wnt/JNK signaling.</title>
        <authorList>
            <person name="Schwarz-Romond T."/>
            <person name="Asbrand C."/>
            <person name="Bakkers J."/>
            <person name="Kuehl M."/>
            <person name="Schaeffer H.J."/>
            <person name="Huelsken J."/>
            <person name="Behrens J."/>
            <person name="Hammerschmidt M."/>
            <person name="Birchmeier W."/>
        </authorList>
    </citation>
    <scope>INTERACTION WITH ANKRD6</scope>
</reference>
<reference key="6">
    <citation type="journal article" date="2002" name="J. Biol. Chem.">
        <title>SUMO-1 modification of the C-terminal KVEKVD of Axin is required for JNK activation but has no effect on Wnt signaling.</title>
        <authorList>
            <person name="Rui H.L."/>
            <person name="Fan E."/>
            <person name="Zhou H.M."/>
            <person name="Xu Z."/>
            <person name="Zhang Y."/>
            <person name="Lin S.C."/>
        </authorList>
    </citation>
    <scope>SUMOYLATION AT LYS-858 AND LYS-861</scope>
    <scope>INTERACTION WITH MAP3K1; SUMO1; PIAS1; PIAS2 AND PIAS4</scope>
    <scope>FUNCTION</scope>
    <scope>HOMODIMERIZATION</scope>
    <scope>MUTAGENESIS OF 858-LYS--ASP-863</scope>
</reference>
<reference key="7">
    <citation type="journal article" date="2004" name="Biochem. Biophys. Res. Commun.">
        <title>Cyclin-dependent kinase 2 regulates the interaction of Axin with beta-catenin.</title>
        <authorList>
            <person name="Kim S.I."/>
            <person name="Park C.S."/>
            <person name="Lee M.S."/>
            <person name="Kwon M.S."/>
            <person name="Jho E.H."/>
            <person name="Song W.K."/>
        </authorList>
    </citation>
    <scope>PHOSPHORYLATION</scope>
    <scope>INTERACTION WITH CTNNB1</scope>
</reference>
<reference key="8">
    <citation type="journal article" date="2004" name="EMBO J.">
        <title>Axin stimulates p53 functions by activation of HIPK2 kinase through multimeric complex formation.</title>
        <authorList>
            <person name="Rui Y."/>
            <person name="Xu Z."/>
            <person name="Lin S."/>
            <person name="Li Q."/>
            <person name="Rui H."/>
            <person name="Luo W."/>
            <person name="Zhou H.-M."/>
            <person name="Cheung P.-Y."/>
            <person name="Wu Z."/>
            <person name="Ye Z."/>
            <person name="Li P."/>
            <person name="Han J."/>
            <person name="Lin S.-C."/>
        </authorList>
    </citation>
    <scope>FUNCTION</scope>
    <scope>INTERACTION WITH TP53 AND HIPK2</scope>
    <scope>IDENTIFICATION IN A COMPLEX WITH TP53 AND HIPK2</scope>
</reference>
<reference key="9">
    <citation type="journal article" date="2004" name="J. Biol. Chem.">
        <title>The DIX domain protein coiled-coil-DIX1 inhibits c-Jun N-terminal kinase activation by Axin and dishevelled through distinct mechanisms.</title>
        <authorList>
            <person name="Wong C.K."/>
            <person name="Luo W."/>
            <person name="Deng Y."/>
            <person name="Zou H."/>
            <person name="Ye Z."/>
            <person name="Lin S.-C."/>
        </authorList>
    </citation>
    <scope>INTERACTION WITH DIXDC1; MAP3K1 AND MAP3K4</scope>
</reference>
<reference key="10">
    <citation type="journal article" date="2006" name="Genes Dev.">
        <title>The role of microtubule actin cross-linking factor 1 (MACF1) in the Wnt signaling pathway.</title>
        <authorList>
            <person name="Chen H.J."/>
            <person name="Lin C.M."/>
            <person name="Lin C.S."/>
            <person name="Perez-Olle R."/>
            <person name="Leung C.L."/>
            <person name="Liem R.K."/>
        </authorList>
    </citation>
    <scope>SUBCELLULAR LOCATION</scope>
</reference>
<reference key="11">
    <citation type="journal article" date="2007" name="Dev. Cell">
        <title>A beta-catenin-independent dorsalization pathway activated by Axin/JNK signaling and antagonized by aida.</title>
        <authorList>
            <person name="Rui Y."/>
            <person name="Xu Z."/>
            <person name="Xiong B."/>
            <person name="Cao Y."/>
            <person name="Lin S."/>
            <person name="Zhang M."/>
            <person name="Chan S.-C."/>
            <person name="Luo W."/>
            <person name="Han Y."/>
            <person name="Lu Z."/>
            <person name="Ye Z."/>
            <person name="Zhou H.-M."/>
            <person name="Han J."/>
            <person name="Meng A."/>
            <person name="Lin S.-C."/>
        </authorList>
    </citation>
    <scope>FUNCTION</scope>
    <scope>HOMODIMERIZATION</scope>
    <scope>INTERACTION WITH AIDA</scope>
</reference>
<reference key="12">
    <citation type="journal article" date="2008" name="FASEB J.">
        <title>SUMOylation target sites at the C terminus protect Axin from ubiquitination and confer protein stability.</title>
        <authorList>
            <person name="Kim M.J."/>
            <person name="Chia I.V."/>
            <person name="Costantini F."/>
        </authorList>
    </citation>
    <scope>SUMOYLATION AT LYS-858 AND LYS-861</scope>
    <scope>MUTAGENESIS OF LYS-858 AND LYS-861</scope>
</reference>
<reference key="13">
    <citation type="journal article" date="2009" name="J. Biol. Chem.">
        <title>Identification of zinc-finger BED domain-containing 3 (Zbed3) as a novel Axin-interacting protein that activates Wnt/beta-catenin signaling.</title>
        <authorList>
            <person name="Chen T."/>
            <person name="Li M."/>
            <person name="Ding Y."/>
            <person name="Zhang L.S."/>
            <person name="Xi Y."/>
            <person name="Pan W.J."/>
            <person name="Tao D.L."/>
            <person name="Wang J.Y."/>
            <person name="Li L."/>
        </authorList>
    </citation>
    <scope>INTERACTION WITH ZBED3</scope>
    <scope>SUBCELLULAR LOCATION</scope>
</reference>
<reference key="14">
    <citation type="journal article" date="2009" name="Oncogene">
        <title>Dab2 stabilizes Axin and attenuates Wnt/beta-catenin signaling by preventing protein phosphatase 1 (PP1)-Axin interactions.</title>
        <authorList>
            <person name="Jiang Y."/>
            <person name="Luo W."/>
            <person name="Howe P.H."/>
        </authorList>
    </citation>
    <scope>INTERACTION WITH DAB2</scope>
</reference>
<reference key="15">
    <citation type="journal article" date="2010" name="Cell">
        <title>A tissue-specific atlas of mouse protein phosphorylation and expression.</title>
        <authorList>
            <person name="Huttlin E.L."/>
            <person name="Jedrychowski M.P."/>
            <person name="Elias J.E."/>
            <person name="Goswami T."/>
            <person name="Rad R."/>
            <person name="Beausoleil S.A."/>
            <person name="Villen J."/>
            <person name="Haas W."/>
            <person name="Sowa M.E."/>
            <person name="Gygi S.P."/>
        </authorList>
    </citation>
    <scope>PHOSPHORYLATION [LARGE SCALE ANALYSIS] AT SER-75 AND SER-217</scope>
    <scope>IDENTIFICATION BY MASS SPECTROMETRY [LARGE SCALE ANALYSIS]</scope>
    <source>
        <tissue>Kidney</tissue>
        <tissue>Liver</tissue>
        <tissue>Testis</tissue>
    </source>
</reference>